<gene>
    <name evidence="1" type="primary">metG</name>
    <name type="ordered locus">MmarC5_1347</name>
</gene>
<feature type="chain" id="PRO_0000331942" description="Methionine--tRNA ligase">
    <location>
        <begin position="1"/>
        <end position="663"/>
    </location>
</feature>
<feature type="domain" description="tRNA-binding" evidence="1">
    <location>
        <begin position="563"/>
        <end position="663"/>
    </location>
</feature>
<feature type="short sequence motif" description="'HIGH' region">
    <location>
        <begin position="10"/>
        <end position="20"/>
    </location>
</feature>
<feature type="short sequence motif" description="'KMSKS' region">
    <location>
        <begin position="323"/>
        <end position="327"/>
    </location>
</feature>
<feature type="binding site" evidence="1">
    <location>
        <position position="142"/>
    </location>
    <ligand>
        <name>Zn(2+)</name>
        <dbReference type="ChEBI" id="CHEBI:29105"/>
    </ligand>
</feature>
<feature type="binding site" evidence="1">
    <location>
        <position position="145"/>
    </location>
    <ligand>
        <name>Zn(2+)</name>
        <dbReference type="ChEBI" id="CHEBI:29105"/>
    </ligand>
</feature>
<feature type="binding site" evidence="1">
    <location>
        <position position="154"/>
    </location>
    <ligand>
        <name>Zn(2+)</name>
        <dbReference type="ChEBI" id="CHEBI:29105"/>
    </ligand>
</feature>
<feature type="binding site" evidence="1">
    <location>
        <position position="157"/>
    </location>
    <ligand>
        <name>Zn(2+)</name>
        <dbReference type="ChEBI" id="CHEBI:29105"/>
    </ligand>
</feature>
<feature type="binding site" evidence="1">
    <location>
        <position position="326"/>
    </location>
    <ligand>
        <name>ATP</name>
        <dbReference type="ChEBI" id="CHEBI:30616"/>
    </ligand>
</feature>
<evidence type="ECO:0000255" key="1">
    <source>
        <dbReference type="HAMAP-Rule" id="MF_00098"/>
    </source>
</evidence>
<dbReference type="EC" id="6.1.1.10" evidence="1"/>
<dbReference type="EMBL" id="CP000609">
    <property type="protein sequence ID" value="ABO35645.1"/>
    <property type="molecule type" value="Genomic_DNA"/>
</dbReference>
<dbReference type="RefSeq" id="WP_011869096.1">
    <property type="nucleotide sequence ID" value="NC_009135.1"/>
</dbReference>
<dbReference type="SMR" id="A4FZL1"/>
<dbReference type="STRING" id="402880.MmarC5_1347"/>
<dbReference type="GeneID" id="4927908"/>
<dbReference type="KEGG" id="mmq:MmarC5_1347"/>
<dbReference type="eggNOG" id="arCOG00810">
    <property type="taxonomic scope" value="Archaea"/>
</dbReference>
<dbReference type="HOGENOM" id="CLU_009710_1_2_2"/>
<dbReference type="OrthoDB" id="371856at2157"/>
<dbReference type="Proteomes" id="UP000000253">
    <property type="component" value="Chromosome"/>
</dbReference>
<dbReference type="GO" id="GO:0017101">
    <property type="term" value="C:aminoacyl-tRNA synthetase multienzyme complex"/>
    <property type="evidence" value="ECO:0007669"/>
    <property type="project" value="TreeGrafter"/>
</dbReference>
<dbReference type="GO" id="GO:0005829">
    <property type="term" value="C:cytosol"/>
    <property type="evidence" value="ECO:0007669"/>
    <property type="project" value="TreeGrafter"/>
</dbReference>
<dbReference type="GO" id="GO:0005524">
    <property type="term" value="F:ATP binding"/>
    <property type="evidence" value="ECO:0007669"/>
    <property type="project" value="UniProtKB-UniRule"/>
</dbReference>
<dbReference type="GO" id="GO:0046872">
    <property type="term" value="F:metal ion binding"/>
    <property type="evidence" value="ECO:0007669"/>
    <property type="project" value="UniProtKB-KW"/>
</dbReference>
<dbReference type="GO" id="GO:0004825">
    <property type="term" value="F:methionine-tRNA ligase activity"/>
    <property type="evidence" value="ECO:0007669"/>
    <property type="project" value="UniProtKB-UniRule"/>
</dbReference>
<dbReference type="GO" id="GO:0000049">
    <property type="term" value="F:tRNA binding"/>
    <property type="evidence" value="ECO:0007669"/>
    <property type="project" value="UniProtKB-KW"/>
</dbReference>
<dbReference type="GO" id="GO:0006431">
    <property type="term" value="P:methionyl-tRNA aminoacylation"/>
    <property type="evidence" value="ECO:0007669"/>
    <property type="project" value="UniProtKB-UniRule"/>
</dbReference>
<dbReference type="CDD" id="cd07957">
    <property type="entry name" value="Anticodon_Ia_Met"/>
    <property type="match status" value="1"/>
</dbReference>
<dbReference type="CDD" id="cd00814">
    <property type="entry name" value="MetRS_core"/>
    <property type="match status" value="1"/>
</dbReference>
<dbReference type="CDD" id="cd02800">
    <property type="entry name" value="tRNA_bind_EcMetRS_like"/>
    <property type="match status" value="1"/>
</dbReference>
<dbReference type="FunFam" id="2.20.28.20:FF:000001">
    <property type="entry name" value="Methionine--tRNA ligase"/>
    <property type="match status" value="1"/>
</dbReference>
<dbReference type="FunFam" id="2.40.50.140:FF:000042">
    <property type="entry name" value="Methionine--tRNA ligase"/>
    <property type="match status" value="1"/>
</dbReference>
<dbReference type="Gene3D" id="3.40.50.620">
    <property type="entry name" value="HUPs"/>
    <property type="match status" value="1"/>
</dbReference>
<dbReference type="Gene3D" id="1.10.730.10">
    <property type="entry name" value="Isoleucyl-tRNA Synthetase, Domain 1"/>
    <property type="match status" value="1"/>
</dbReference>
<dbReference type="Gene3D" id="2.20.28.20">
    <property type="entry name" value="Methionyl-tRNA synthetase, Zn-domain"/>
    <property type="match status" value="1"/>
</dbReference>
<dbReference type="Gene3D" id="2.40.50.140">
    <property type="entry name" value="Nucleic acid-binding proteins"/>
    <property type="match status" value="1"/>
</dbReference>
<dbReference type="HAMAP" id="MF_00098">
    <property type="entry name" value="Met_tRNA_synth_type1"/>
    <property type="match status" value="1"/>
</dbReference>
<dbReference type="InterPro" id="IPR041872">
    <property type="entry name" value="Anticodon_Met"/>
</dbReference>
<dbReference type="InterPro" id="IPR004495">
    <property type="entry name" value="Met-tRNA-synth_bsu_C"/>
</dbReference>
<dbReference type="InterPro" id="IPR023458">
    <property type="entry name" value="Met-tRNA_ligase_1"/>
</dbReference>
<dbReference type="InterPro" id="IPR014758">
    <property type="entry name" value="Met-tRNA_synth"/>
</dbReference>
<dbReference type="InterPro" id="IPR015413">
    <property type="entry name" value="Methionyl/Leucyl_tRNA_Synth"/>
</dbReference>
<dbReference type="InterPro" id="IPR033911">
    <property type="entry name" value="MetRS_core"/>
</dbReference>
<dbReference type="InterPro" id="IPR029038">
    <property type="entry name" value="MetRS_Zn"/>
</dbReference>
<dbReference type="InterPro" id="IPR012340">
    <property type="entry name" value="NA-bd_OB-fold"/>
</dbReference>
<dbReference type="InterPro" id="IPR014729">
    <property type="entry name" value="Rossmann-like_a/b/a_fold"/>
</dbReference>
<dbReference type="InterPro" id="IPR002547">
    <property type="entry name" value="tRNA-bd_dom"/>
</dbReference>
<dbReference type="InterPro" id="IPR009080">
    <property type="entry name" value="tRNAsynth_Ia_anticodon-bd"/>
</dbReference>
<dbReference type="NCBIfam" id="TIGR00398">
    <property type="entry name" value="metG"/>
    <property type="match status" value="1"/>
</dbReference>
<dbReference type="NCBIfam" id="TIGR00399">
    <property type="entry name" value="metG_C_term"/>
    <property type="match status" value="1"/>
</dbReference>
<dbReference type="NCBIfam" id="NF001100">
    <property type="entry name" value="PRK00133.1"/>
    <property type="match status" value="1"/>
</dbReference>
<dbReference type="PANTHER" id="PTHR45765">
    <property type="entry name" value="METHIONINE--TRNA LIGASE"/>
    <property type="match status" value="1"/>
</dbReference>
<dbReference type="PANTHER" id="PTHR45765:SF1">
    <property type="entry name" value="METHIONINE--TRNA LIGASE, CYTOPLASMIC"/>
    <property type="match status" value="1"/>
</dbReference>
<dbReference type="Pfam" id="PF19303">
    <property type="entry name" value="Anticodon_3"/>
    <property type="match status" value="1"/>
</dbReference>
<dbReference type="Pfam" id="PF09334">
    <property type="entry name" value="tRNA-synt_1g"/>
    <property type="match status" value="1"/>
</dbReference>
<dbReference type="Pfam" id="PF01588">
    <property type="entry name" value="tRNA_bind"/>
    <property type="match status" value="1"/>
</dbReference>
<dbReference type="PRINTS" id="PR01041">
    <property type="entry name" value="TRNASYNTHMET"/>
</dbReference>
<dbReference type="SUPFAM" id="SSF47323">
    <property type="entry name" value="Anticodon-binding domain of a subclass of class I aminoacyl-tRNA synthetases"/>
    <property type="match status" value="1"/>
</dbReference>
<dbReference type="SUPFAM" id="SSF57770">
    <property type="entry name" value="Methionyl-tRNA synthetase (MetRS), Zn-domain"/>
    <property type="match status" value="1"/>
</dbReference>
<dbReference type="SUPFAM" id="SSF50249">
    <property type="entry name" value="Nucleic acid-binding proteins"/>
    <property type="match status" value="1"/>
</dbReference>
<dbReference type="SUPFAM" id="SSF52374">
    <property type="entry name" value="Nucleotidylyl transferase"/>
    <property type="match status" value="1"/>
</dbReference>
<dbReference type="PROSITE" id="PS50886">
    <property type="entry name" value="TRBD"/>
    <property type="match status" value="1"/>
</dbReference>
<comment type="function">
    <text evidence="1">Is required not only for elongation of protein synthesis but also for the initiation of all mRNA translation through initiator tRNA(fMet) aminoacylation.</text>
</comment>
<comment type="catalytic activity">
    <reaction evidence="1">
        <text>tRNA(Met) + L-methionine + ATP = L-methionyl-tRNA(Met) + AMP + diphosphate</text>
        <dbReference type="Rhea" id="RHEA:13481"/>
        <dbReference type="Rhea" id="RHEA-COMP:9667"/>
        <dbReference type="Rhea" id="RHEA-COMP:9698"/>
        <dbReference type="ChEBI" id="CHEBI:30616"/>
        <dbReference type="ChEBI" id="CHEBI:33019"/>
        <dbReference type="ChEBI" id="CHEBI:57844"/>
        <dbReference type="ChEBI" id="CHEBI:78442"/>
        <dbReference type="ChEBI" id="CHEBI:78530"/>
        <dbReference type="ChEBI" id="CHEBI:456215"/>
        <dbReference type="EC" id="6.1.1.10"/>
    </reaction>
</comment>
<comment type="cofactor">
    <cofactor evidence="1">
        <name>Zn(2+)</name>
        <dbReference type="ChEBI" id="CHEBI:29105"/>
    </cofactor>
    <text evidence="1">Binds 1 zinc ion per subunit.</text>
</comment>
<comment type="subunit">
    <text evidence="1">Homodimer.</text>
</comment>
<comment type="subcellular location">
    <subcellularLocation>
        <location evidence="1">Cytoplasm</location>
    </subcellularLocation>
</comment>
<comment type="similarity">
    <text evidence="1">Belongs to the class-I aminoacyl-tRNA synthetase family. MetG type 1 subfamily.</text>
</comment>
<name>SYM_METM5</name>
<protein>
    <recommendedName>
        <fullName evidence="1">Methionine--tRNA ligase</fullName>
        <ecNumber evidence="1">6.1.1.10</ecNumber>
    </recommendedName>
    <alternativeName>
        <fullName evidence="1">Methionyl-tRNA synthetase</fullName>
        <shortName evidence="1">MetRS</shortName>
    </alternativeName>
</protein>
<proteinExistence type="inferred from homology"/>
<reference key="1">
    <citation type="submission" date="2007-03" db="EMBL/GenBank/DDBJ databases">
        <title>Complete sequence of chromosome of Methanococcus maripaludis C5.</title>
        <authorList>
            <consortium name="US DOE Joint Genome Institute"/>
            <person name="Copeland A."/>
            <person name="Lucas S."/>
            <person name="Lapidus A."/>
            <person name="Barry K."/>
            <person name="Glavina del Rio T."/>
            <person name="Dalin E."/>
            <person name="Tice H."/>
            <person name="Pitluck S."/>
            <person name="Chertkov O."/>
            <person name="Brettin T."/>
            <person name="Bruce D."/>
            <person name="Han C."/>
            <person name="Detter J.C."/>
            <person name="Schmutz J."/>
            <person name="Larimer F."/>
            <person name="Land M."/>
            <person name="Hauser L."/>
            <person name="Kyrpides N."/>
            <person name="Mikhailova N."/>
            <person name="Sieprawska-Lupa M."/>
            <person name="Whitman W.B."/>
            <person name="Richardson P."/>
        </authorList>
    </citation>
    <scope>NUCLEOTIDE SEQUENCE [LARGE SCALE GENOMIC DNA]</scope>
    <source>
        <strain>C5 / ATCC BAA-1333</strain>
    </source>
</reference>
<keyword id="KW-0030">Aminoacyl-tRNA synthetase</keyword>
<keyword id="KW-0067">ATP-binding</keyword>
<keyword id="KW-0963">Cytoplasm</keyword>
<keyword id="KW-0436">Ligase</keyword>
<keyword id="KW-0479">Metal-binding</keyword>
<keyword id="KW-0547">Nucleotide-binding</keyword>
<keyword id="KW-0648">Protein biosynthesis</keyword>
<keyword id="KW-0694">RNA-binding</keyword>
<keyword id="KW-0820">tRNA-binding</keyword>
<keyword id="KW-0862">Zinc</keyword>
<sequence>MKHLVTTALAYTNGPLHLGHARSTYIPADIYTRYLRLKGEEVIHVGGTDNHGVPITLTAEREGVKPIDIVDRYHNAIKADLDSLNVSFDTFGRTHSDIHIETAQEFYSKLKENGYIYEKEIEQFYCEKCDMYLADRYVEGICPFCEGEARGDHCEVCGRHLEPTELVNPYCIHCNSKPEIKRTTHYFFKLSAMQDVLKEYIENSPEMPEHVKNMALRWIEELHDWDVSRNIKWGVPIPGCDDQVMYVWIEAPIGYVSFTKQLGDLWKDYWLENTGDSKISHFIGKDITVHHAVFWPGILKGIGGYKMPNAVVSGGYLTLENKKMSTSKNWVVWVKDFIENFSSDYLRYFFMINAPLNRDTDFSWDDFQKRINTELIDIIGNFTHRTLVFTERKFGSTPVVDLNQLKDEDKKLISKCEDTLNRVDSLIREYNFKDALMEIIHLAKEGNGYFQGMAPWAIKDEERLKEVMYTCSVALKYIVYLLSSFMPEKTALLLEYMNEELDLEVRGNPLKKPKVIFTKVSDEDISRMKENLMKATKKAETKSDEKSKKVKSGEKMDIIDIDYFGNIDLRVGQILEVEEVPRSKKLYKITADLGDEKRQIVSGLKGAYEAEELVGKKVIIICNLKPAKLCGVESQGMLLAAEDDSIVSLLALDRDLPVGSKIH</sequence>
<accession>A4FZL1</accession>
<organism>
    <name type="scientific">Methanococcus maripaludis (strain C5 / ATCC BAA-1333)</name>
    <dbReference type="NCBI Taxonomy" id="402880"/>
    <lineage>
        <taxon>Archaea</taxon>
        <taxon>Methanobacteriati</taxon>
        <taxon>Methanobacteriota</taxon>
        <taxon>Methanomada group</taxon>
        <taxon>Methanococci</taxon>
        <taxon>Methanococcales</taxon>
        <taxon>Methanococcaceae</taxon>
        <taxon>Methanococcus</taxon>
    </lineage>
</organism>